<protein>
    <recommendedName>
        <fullName>Clumping factor B</fullName>
    </recommendedName>
    <alternativeName>
        <fullName>Fibrinogen receptor B</fullName>
    </alternativeName>
    <alternativeName>
        <fullName>Fibrinogen-binding protein B</fullName>
    </alternativeName>
</protein>
<proteinExistence type="inferred from homology"/>
<accession>Q99R07</accession>
<name>CLFB_STAAM</name>
<feature type="signal peptide" evidence="3">
    <location>
        <begin position="1"/>
        <end position="44"/>
    </location>
</feature>
<feature type="chain" id="PRO_0000042008" description="Clumping factor B">
    <location>
        <begin position="45"/>
        <end position="841"/>
    </location>
</feature>
<feature type="propeptide" id="PRO_0000042009" description="Removed by sortase" evidence="4">
    <location>
        <begin position="842"/>
        <end position="877"/>
    </location>
</feature>
<feature type="region of interest" description="Disordered" evidence="5">
    <location>
        <begin position="44"/>
        <end position="192"/>
    </location>
</feature>
<feature type="region of interest" description="Ligand binding A region" evidence="1">
    <location>
        <begin position="45"/>
        <end position="542"/>
    </location>
</feature>
<feature type="region of interest" description="Disordered" evidence="5">
    <location>
        <begin position="530"/>
        <end position="849"/>
    </location>
</feature>
<feature type="short sequence motif" description="YSIRK-G/S signaling motif" evidence="2">
    <location>
        <begin position="15"/>
        <end position="26"/>
    </location>
</feature>
<feature type="short sequence motif" description="MIDAS-like motif">
    <location>
        <begin position="272"/>
        <end position="276"/>
    </location>
</feature>
<feature type="short sequence motif" description="LPXTG sorting signal" evidence="4">
    <location>
        <begin position="838"/>
        <end position="842"/>
    </location>
</feature>
<feature type="compositionally biased region" description="Polar residues" evidence="5">
    <location>
        <begin position="44"/>
        <end position="61"/>
    </location>
</feature>
<feature type="compositionally biased region" description="Polar residues" evidence="5">
    <location>
        <begin position="68"/>
        <end position="95"/>
    </location>
</feature>
<feature type="compositionally biased region" description="Low complexity" evidence="5">
    <location>
        <begin position="96"/>
        <end position="119"/>
    </location>
</feature>
<feature type="compositionally biased region" description="Polar residues" evidence="5">
    <location>
        <begin position="120"/>
        <end position="189"/>
    </location>
</feature>
<feature type="compositionally biased region" description="Pro residues" evidence="5">
    <location>
        <begin position="545"/>
        <end position="555"/>
    </location>
</feature>
<feature type="compositionally biased region" description="Acidic residues" evidence="5">
    <location>
        <begin position="556"/>
        <end position="801"/>
    </location>
</feature>
<feature type="compositionally biased region" description="Polar residues" evidence="5">
    <location>
        <begin position="805"/>
        <end position="816"/>
    </location>
</feature>
<feature type="compositionally biased region" description="Basic and acidic residues" evidence="5">
    <location>
        <begin position="833"/>
        <end position="846"/>
    </location>
</feature>
<feature type="site" description="Cleavage; by aureolysin" evidence="1">
    <location>
        <begin position="197"/>
        <end position="198"/>
    </location>
</feature>
<feature type="site" description="Cleavage; by aureolysin" evidence="1">
    <location>
        <begin position="199"/>
        <end position="200"/>
    </location>
</feature>
<feature type="modified residue" description="Pentaglycyl murein peptidoglycan amidated threonine" evidence="4">
    <location>
        <position position="841"/>
    </location>
</feature>
<organism>
    <name type="scientific">Staphylococcus aureus (strain Mu50 / ATCC 700699)</name>
    <dbReference type="NCBI Taxonomy" id="158878"/>
    <lineage>
        <taxon>Bacteria</taxon>
        <taxon>Bacillati</taxon>
        <taxon>Bacillota</taxon>
        <taxon>Bacilli</taxon>
        <taxon>Bacillales</taxon>
        <taxon>Staphylococcaceae</taxon>
        <taxon>Staphylococcus</taxon>
    </lineage>
</organism>
<reference key="1">
    <citation type="journal article" date="2001" name="Lancet">
        <title>Whole genome sequencing of meticillin-resistant Staphylococcus aureus.</title>
        <authorList>
            <person name="Kuroda M."/>
            <person name="Ohta T."/>
            <person name="Uchiyama I."/>
            <person name="Baba T."/>
            <person name="Yuzawa H."/>
            <person name="Kobayashi I."/>
            <person name="Cui L."/>
            <person name="Oguchi A."/>
            <person name="Aoki K."/>
            <person name="Nagai Y."/>
            <person name="Lian J.-Q."/>
            <person name="Ito T."/>
            <person name="Kanamori M."/>
            <person name="Matsumaru H."/>
            <person name="Maruyama A."/>
            <person name="Murakami H."/>
            <person name="Hosoyama A."/>
            <person name="Mizutani-Ui Y."/>
            <person name="Takahashi N.K."/>
            <person name="Sawano T."/>
            <person name="Inoue R."/>
            <person name="Kaito C."/>
            <person name="Sekimizu K."/>
            <person name="Hirakawa H."/>
            <person name="Kuhara S."/>
            <person name="Goto S."/>
            <person name="Yabuzaki J."/>
            <person name="Kanehisa M."/>
            <person name="Yamashita A."/>
            <person name="Oshima K."/>
            <person name="Furuya K."/>
            <person name="Yoshino C."/>
            <person name="Shiba T."/>
            <person name="Hattori M."/>
            <person name="Ogasawara N."/>
            <person name="Hayashi H."/>
            <person name="Hiramatsu K."/>
        </authorList>
    </citation>
    <scope>NUCLEOTIDE SEQUENCE [LARGE SCALE GENOMIC DNA]</scope>
    <source>
        <strain>Mu50 / ATCC 700699</strain>
    </source>
</reference>
<dbReference type="EMBL" id="BA000017">
    <property type="protein sequence ID" value="BAB58792.1"/>
    <property type="molecule type" value="Genomic_DNA"/>
</dbReference>
<dbReference type="RefSeq" id="WP_000745891.1">
    <property type="nucleotide sequence ID" value="NC_002758.2"/>
</dbReference>
<dbReference type="SMR" id="Q99R07"/>
<dbReference type="KEGG" id="sav:SAV2630"/>
<dbReference type="HOGENOM" id="CLU_004137_2_0_9"/>
<dbReference type="PhylomeDB" id="Q99R07"/>
<dbReference type="PRO" id="PR:Q99R07"/>
<dbReference type="Proteomes" id="UP000002481">
    <property type="component" value="Chromosome"/>
</dbReference>
<dbReference type="GO" id="GO:0005576">
    <property type="term" value="C:extracellular region"/>
    <property type="evidence" value="ECO:0007669"/>
    <property type="project" value="UniProtKB-KW"/>
</dbReference>
<dbReference type="GO" id="GO:0007155">
    <property type="term" value="P:cell adhesion"/>
    <property type="evidence" value="ECO:0007669"/>
    <property type="project" value="InterPro"/>
</dbReference>
<dbReference type="Gene3D" id="2.60.40.1280">
    <property type="match status" value="1"/>
</dbReference>
<dbReference type="Gene3D" id="2.60.40.1290">
    <property type="match status" value="1"/>
</dbReference>
<dbReference type="InterPro" id="IPR011266">
    <property type="entry name" value="Adhesin_Fg-bd_dom_2"/>
</dbReference>
<dbReference type="InterPro" id="IPR008966">
    <property type="entry name" value="Adhesion_dom_sf"/>
</dbReference>
<dbReference type="InterPro" id="IPR011252">
    <property type="entry name" value="Fibrogen-bd_dom1"/>
</dbReference>
<dbReference type="InterPro" id="IPR019931">
    <property type="entry name" value="LPXTG_anchor"/>
</dbReference>
<dbReference type="InterPro" id="IPR050972">
    <property type="entry name" value="SDr-like"/>
</dbReference>
<dbReference type="InterPro" id="IPR041171">
    <property type="entry name" value="SDR_Ig"/>
</dbReference>
<dbReference type="InterPro" id="IPR005877">
    <property type="entry name" value="YSIRK_signal_dom"/>
</dbReference>
<dbReference type="NCBIfam" id="TIGR01167">
    <property type="entry name" value="LPXTG_anchor"/>
    <property type="match status" value="1"/>
</dbReference>
<dbReference type="NCBIfam" id="NF033845">
    <property type="entry name" value="MSCRAMM_ClfB"/>
    <property type="match status" value="1"/>
</dbReference>
<dbReference type="NCBIfam" id="TIGR01168">
    <property type="entry name" value="YSIRK_signal"/>
    <property type="match status" value="1"/>
</dbReference>
<dbReference type="PANTHER" id="PTHR34403">
    <property type="entry name" value="TOL-PAL SYSTEM PROTEIN TOLA"/>
    <property type="match status" value="1"/>
</dbReference>
<dbReference type="PANTHER" id="PTHR34403:SF8">
    <property type="entry name" value="TOL-PAL SYSTEM PROTEIN TOLA"/>
    <property type="match status" value="1"/>
</dbReference>
<dbReference type="Pfam" id="PF17961">
    <property type="entry name" value="Big_8"/>
    <property type="match status" value="1"/>
</dbReference>
<dbReference type="Pfam" id="PF00746">
    <property type="entry name" value="Gram_pos_anchor"/>
    <property type="match status" value="1"/>
</dbReference>
<dbReference type="Pfam" id="PF10425">
    <property type="entry name" value="SdrG_C_C"/>
    <property type="match status" value="1"/>
</dbReference>
<dbReference type="Pfam" id="PF04650">
    <property type="entry name" value="YSIRK_signal"/>
    <property type="match status" value="1"/>
</dbReference>
<dbReference type="SUPFAM" id="SSF49401">
    <property type="entry name" value="Bacterial adhesins"/>
    <property type="match status" value="2"/>
</dbReference>
<dbReference type="PROSITE" id="PS50847">
    <property type="entry name" value="GRAM_POS_ANCHORING"/>
    <property type="match status" value="1"/>
</dbReference>
<gene>
    <name type="primary">clfB</name>
    <name type="ordered locus">SAV2630</name>
</gene>
<keyword id="KW-0134">Cell wall</keyword>
<keyword id="KW-0572">Peptidoglycan-anchor</keyword>
<keyword id="KW-0964">Secreted</keyword>
<keyword id="KW-0732">Signal</keyword>
<keyword id="KW-0843">Virulence</keyword>
<sequence>MKKRIDYLSNKQNKYSIRRFTVGTTSVIVGATILFGIGNHQAQASEQSNDTTQSSKNNASADSEKNNMIETPQLNTTANDTSDISANTNSANVDSTTKPMSTQTSNTTTTEPASTNETPQPTAIKNQATAAKMQDQTVPQEANSQVDNKTTNDANSIATNSELKNSQTLDLPQSSPQTISNAQGTSKPSVRTRAVRSLAVAEPVVNAADAKGTNVNDKVTASNFKLEKTTFDPNQSGNTFMAANFTVTDKVKSGDYFTAKLPDSLTGNGDVDYSNSNNTMPIADIKSTNGDVVAKATYDILTKTYTFVFTDYVNNKENINGQFSLPLFTDRAKAPKSGTYDANINIADEMFNNKITYNYSSPIAGIDKPNGANISSQIIGVDTASGQNTYKQTVFVNPKQRVLGNTWVYIKGYQDKIEESSGKVSATDTKLRIFEVNDTSKLSDSYYADPNDSNLKEVTDQFKNRIYYEHPNVASIKFGDITKTYVVLVEGHYDNTGKNLKTQVIQENVDPVTNRDYSIFGWNNENVVRYGGGSADGDSAVNPKDPTPGPPVDPEPSPDPEPEPTPDPEPSPDPEPEPSPDPDPDSDSDSDSGSDSDSGSDSDSESDSDSDSDSDSDSDSDSESDSDSESDSDSDSDSDSDSDSDSESDSDSDSDSDSDSDSDSESDSDSESDSESDSDSDSDSDSDSDSDSDSDSDSDSDSDSDSDSDSDSESDSDSDSDSDSDSDSDSDSDSDSDSDSDSDSDSDSDSDSDSDSDSDSDSDSDSDSDSDSDSDSDSDSDSDSDSDSDSDSDSDSDSDSDSDSRVTPPNNEQKAPSNPKGEVNHSNKVSKQHKTDALPETGDKSENTNATLFGAMMALLGSLLLFRKRKQDHKEKA</sequence>
<comment type="function">
    <text evidence="1">Cell surface-associated protein implicated in virulence by promoting bacterial attachment to both alpha- and beta-chains of human fibrinogen and inducing the formation of bacterial clumps.</text>
</comment>
<comment type="subcellular location">
    <subcellularLocation>
        <location evidence="4">Secreted</location>
        <location evidence="4">Cell wall</location>
        <topology evidence="4">Peptidoglycan-anchor</topology>
    </subcellularLocation>
    <text evidence="2">Anchored to the cell wall by sortase A (By similarity).</text>
</comment>
<comment type="domain">
    <text evidence="1">The Asp/Ser-rich domain functions as a stalk to allow the ligand binding domain to be displayed in a functional form on the cell surface.</text>
</comment>
<comment type="PTM">
    <text evidence="1">Proteolytically cleaved by aureolysin (aur). This cleavage leads to the inactivation of ClfB (By similarity).</text>
</comment>
<comment type="similarity">
    <text evidence="6">Belongs to the serine-aspartate repeat-containing protein (SDr) family.</text>
</comment>
<evidence type="ECO:0000250" key="1"/>
<evidence type="ECO:0000250" key="2">
    <source>
        <dbReference type="UniProtKB" id="Q2FUY2"/>
    </source>
</evidence>
<evidence type="ECO:0000255" key="3"/>
<evidence type="ECO:0000255" key="4">
    <source>
        <dbReference type="PROSITE-ProRule" id="PRU00477"/>
    </source>
</evidence>
<evidence type="ECO:0000256" key="5">
    <source>
        <dbReference type="SAM" id="MobiDB-lite"/>
    </source>
</evidence>
<evidence type="ECO:0000305" key="6"/>